<protein>
    <recommendedName>
        <fullName>Mitochondrial fission regulator 1</fullName>
    </recommendedName>
    <alternativeName>
        <fullName>Chondrocyte protein with a poly-proline region</fullName>
    </alternativeName>
</protein>
<proteinExistence type="evidence at protein level"/>
<comment type="function">
    <text evidence="5">May play a role in mitochondrial aerobic respiration. May also regulate mitochondrial organization and fission.</text>
</comment>
<comment type="subcellular location">
    <subcellularLocation>
        <location evidence="1">Mitochondrion</location>
    </subcellularLocation>
    <text evidence="1">May be associated with the inner and the outer mitochondrial membrane.</text>
</comment>
<comment type="tissue specificity">
    <text evidence="4">Ubiquitously expressed with higher expression in testis.</text>
</comment>
<comment type="disruption phenotype">
    <text evidence="4">Mice are viable and fertile. However, oxidative DNA damages appear in the testis, associated with a reduced expression of genes encoding enzymes with oxidoreductase activity.</text>
</comment>
<comment type="similarity">
    <text evidence="6">Belongs to the MTFR1 family.</text>
</comment>
<evidence type="ECO:0000250" key="1"/>
<evidence type="ECO:0000255" key="2"/>
<evidence type="ECO:0000256" key="3">
    <source>
        <dbReference type="SAM" id="MobiDB-lite"/>
    </source>
</evidence>
<evidence type="ECO:0000269" key="4">
    <source>
    </source>
</evidence>
<evidence type="ECO:0000269" key="5">
    <source>
    </source>
</evidence>
<evidence type="ECO:0000305" key="6"/>
<evidence type="ECO:0007744" key="7">
    <source>
    </source>
</evidence>
<reference key="1">
    <citation type="journal article" date="2004" name="J. Cell. Physiol.">
        <title>Chondrocyte protein with a poly-proline region (CHPPR) is a novel mitochondrial protein and promotes mitochondrial fission.</title>
        <authorList>
            <person name="Tonachini L."/>
            <person name="Monticone M."/>
            <person name="Puri C."/>
            <person name="Tacchetti C."/>
            <person name="Pinton P."/>
            <person name="Rizzuto R."/>
            <person name="Cancedda R."/>
            <person name="Tavella S."/>
            <person name="Castagnola P."/>
        </authorList>
    </citation>
    <scope>NUCLEOTIDE SEQUENCE [MRNA]</scope>
</reference>
<reference key="2">
    <citation type="journal article" date="2005" name="Science">
        <title>The transcriptional landscape of the mammalian genome.</title>
        <authorList>
            <person name="Carninci P."/>
            <person name="Kasukawa T."/>
            <person name="Katayama S."/>
            <person name="Gough J."/>
            <person name="Frith M.C."/>
            <person name="Maeda N."/>
            <person name="Oyama R."/>
            <person name="Ravasi T."/>
            <person name="Lenhard B."/>
            <person name="Wells C."/>
            <person name="Kodzius R."/>
            <person name="Shimokawa K."/>
            <person name="Bajic V.B."/>
            <person name="Brenner S.E."/>
            <person name="Batalov S."/>
            <person name="Forrest A.R."/>
            <person name="Zavolan M."/>
            <person name="Davis M.J."/>
            <person name="Wilming L.G."/>
            <person name="Aidinis V."/>
            <person name="Allen J.E."/>
            <person name="Ambesi-Impiombato A."/>
            <person name="Apweiler R."/>
            <person name="Aturaliya R.N."/>
            <person name="Bailey T.L."/>
            <person name="Bansal M."/>
            <person name="Baxter L."/>
            <person name="Beisel K.W."/>
            <person name="Bersano T."/>
            <person name="Bono H."/>
            <person name="Chalk A.M."/>
            <person name="Chiu K.P."/>
            <person name="Choudhary V."/>
            <person name="Christoffels A."/>
            <person name="Clutterbuck D.R."/>
            <person name="Crowe M.L."/>
            <person name="Dalla E."/>
            <person name="Dalrymple B.P."/>
            <person name="de Bono B."/>
            <person name="Della Gatta G."/>
            <person name="di Bernardo D."/>
            <person name="Down T."/>
            <person name="Engstrom P."/>
            <person name="Fagiolini M."/>
            <person name="Faulkner G."/>
            <person name="Fletcher C.F."/>
            <person name="Fukushima T."/>
            <person name="Furuno M."/>
            <person name="Futaki S."/>
            <person name="Gariboldi M."/>
            <person name="Georgii-Hemming P."/>
            <person name="Gingeras T.R."/>
            <person name="Gojobori T."/>
            <person name="Green R.E."/>
            <person name="Gustincich S."/>
            <person name="Harbers M."/>
            <person name="Hayashi Y."/>
            <person name="Hensch T.K."/>
            <person name="Hirokawa N."/>
            <person name="Hill D."/>
            <person name="Huminiecki L."/>
            <person name="Iacono M."/>
            <person name="Ikeo K."/>
            <person name="Iwama A."/>
            <person name="Ishikawa T."/>
            <person name="Jakt M."/>
            <person name="Kanapin A."/>
            <person name="Katoh M."/>
            <person name="Kawasawa Y."/>
            <person name="Kelso J."/>
            <person name="Kitamura H."/>
            <person name="Kitano H."/>
            <person name="Kollias G."/>
            <person name="Krishnan S.P."/>
            <person name="Kruger A."/>
            <person name="Kummerfeld S.K."/>
            <person name="Kurochkin I.V."/>
            <person name="Lareau L.F."/>
            <person name="Lazarevic D."/>
            <person name="Lipovich L."/>
            <person name="Liu J."/>
            <person name="Liuni S."/>
            <person name="McWilliam S."/>
            <person name="Madan Babu M."/>
            <person name="Madera M."/>
            <person name="Marchionni L."/>
            <person name="Matsuda H."/>
            <person name="Matsuzawa S."/>
            <person name="Miki H."/>
            <person name="Mignone F."/>
            <person name="Miyake S."/>
            <person name="Morris K."/>
            <person name="Mottagui-Tabar S."/>
            <person name="Mulder N."/>
            <person name="Nakano N."/>
            <person name="Nakauchi H."/>
            <person name="Ng P."/>
            <person name="Nilsson R."/>
            <person name="Nishiguchi S."/>
            <person name="Nishikawa S."/>
            <person name="Nori F."/>
            <person name="Ohara O."/>
            <person name="Okazaki Y."/>
            <person name="Orlando V."/>
            <person name="Pang K.C."/>
            <person name="Pavan W.J."/>
            <person name="Pavesi G."/>
            <person name="Pesole G."/>
            <person name="Petrovsky N."/>
            <person name="Piazza S."/>
            <person name="Reed J."/>
            <person name="Reid J.F."/>
            <person name="Ring B.Z."/>
            <person name="Ringwald M."/>
            <person name="Rost B."/>
            <person name="Ruan Y."/>
            <person name="Salzberg S.L."/>
            <person name="Sandelin A."/>
            <person name="Schneider C."/>
            <person name="Schoenbach C."/>
            <person name="Sekiguchi K."/>
            <person name="Semple C.A."/>
            <person name="Seno S."/>
            <person name="Sessa L."/>
            <person name="Sheng Y."/>
            <person name="Shibata Y."/>
            <person name="Shimada H."/>
            <person name="Shimada K."/>
            <person name="Silva D."/>
            <person name="Sinclair B."/>
            <person name="Sperling S."/>
            <person name="Stupka E."/>
            <person name="Sugiura K."/>
            <person name="Sultana R."/>
            <person name="Takenaka Y."/>
            <person name="Taki K."/>
            <person name="Tammoja K."/>
            <person name="Tan S.L."/>
            <person name="Tang S."/>
            <person name="Taylor M.S."/>
            <person name="Tegner J."/>
            <person name="Teichmann S.A."/>
            <person name="Ueda H.R."/>
            <person name="van Nimwegen E."/>
            <person name="Verardo R."/>
            <person name="Wei C.L."/>
            <person name="Yagi K."/>
            <person name="Yamanishi H."/>
            <person name="Zabarovsky E."/>
            <person name="Zhu S."/>
            <person name="Zimmer A."/>
            <person name="Hide W."/>
            <person name="Bult C."/>
            <person name="Grimmond S.M."/>
            <person name="Teasdale R.D."/>
            <person name="Liu E.T."/>
            <person name="Brusic V."/>
            <person name="Quackenbush J."/>
            <person name="Wahlestedt C."/>
            <person name="Mattick J.S."/>
            <person name="Hume D.A."/>
            <person name="Kai C."/>
            <person name="Sasaki D."/>
            <person name="Tomaru Y."/>
            <person name="Fukuda S."/>
            <person name="Kanamori-Katayama M."/>
            <person name="Suzuki M."/>
            <person name="Aoki J."/>
            <person name="Arakawa T."/>
            <person name="Iida J."/>
            <person name="Imamura K."/>
            <person name="Itoh M."/>
            <person name="Kato T."/>
            <person name="Kawaji H."/>
            <person name="Kawagashira N."/>
            <person name="Kawashima T."/>
            <person name="Kojima M."/>
            <person name="Kondo S."/>
            <person name="Konno H."/>
            <person name="Nakano K."/>
            <person name="Ninomiya N."/>
            <person name="Nishio T."/>
            <person name="Okada M."/>
            <person name="Plessy C."/>
            <person name="Shibata K."/>
            <person name="Shiraki T."/>
            <person name="Suzuki S."/>
            <person name="Tagami M."/>
            <person name="Waki K."/>
            <person name="Watahiki A."/>
            <person name="Okamura-Oho Y."/>
            <person name="Suzuki H."/>
            <person name="Kawai J."/>
            <person name="Hayashizaki Y."/>
        </authorList>
    </citation>
    <scope>NUCLEOTIDE SEQUENCE [LARGE SCALE MRNA]</scope>
    <source>
        <strain>C57BL/6J</strain>
        <tissue>Liver</tissue>
        <tissue>Small intestine</tissue>
        <tissue>Testis</tissue>
    </source>
</reference>
<reference key="3">
    <citation type="journal article" date="2004" name="Genome Res.">
        <title>The status, quality, and expansion of the NIH full-length cDNA project: the Mammalian Gene Collection (MGC).</title>
        <authorList>
            <consortium name="The MGC Project Team"/>
        </authorList>
    </citation>
    <scope>NUCLEOTIDE SEQUENCE [LARGE SCALE MRNA]</scope>
    <source>
        <strain>FVB/N</strain>
        <tissue>Liver</tissue>
    </source>
</reference>
<reference key="4">
    <citation type="journal article" date="2007" name="Proc. Natl. Acad. Sci. U.S.A.">
        <title>Large-scale phosphorylation analysis of mouse liver.</title>
        <authorList>
            <person name="Villen J."/>
            <person name="Beausoleil S.A."/>
            <person name="Gerber S.A."/>
            <person name="Gygi S.P."/>
        </authorList>
    </citation>
    <scope>IDENTIFICATION BY MASS SPECTROMETRY [LARGE SCALE ANALYSIS]</scope>
    <source>
        <tissue>Liver</tissue>
    </source>
</reference>
<reference key="5">
    <citation type="journal article" date="2007" name="Reproduction">
        <title>Impaired expression of genes coding for reactive oxygen species scavenging enzymes in testes of Mtfr1/Chppr-deficient mice.</title>
        <authorList>
            <person name="Monticone M."/>
            <person name="Tonachini L."/>
            <person name="Tavella S."/>
            <person name="Degan P."/>
            <person name="Biticchi R."/>
            <person name="Palombi F."/>
            <person name="Puglisi R."/>
            <person name="Boitani C."/>
            <person name="Cancedda R."/>
            <person name="Castagnola P."/>
        </authorList>
    </citation>
    <scope>DISRUPTION PHENOTYPE</scope>
    <scope>TISSUE SPECIFICITY</scope>
</reference>
<reference key="6">
    <citation type="journal article" date="2010" name="Cell">
        <title>A tissue-specific atlas of mouse protein phosphorylation and expression.</title>
        <authorList>
            <person name="Huttlin E.L."/>
            <person name="Jedrychowski M.P."/>
            <person name="Elias J.E."/>
            <person name="Goswami T."/>
            <person name="Rad R."/>
            <person name="Beausoleil S.A."/>
            <person name="Villen J."/>
            <person name="Haas W."/>
            <person name="Sowa M.E."/>
            <person name="Gygi S.P."/>
        </authorList>
    </citation>
    <scope>PHOSPHORYLATION [LARGE SCALE ANALYSIS] AT SER-119 AND SER-129</scope>
    <scope>IDENTIFICATION BY MASS SPECTROMETRY [LARGE SCALE ANALYSIS]</scope>
    <source>
        <tissue>Heart</tissue>
        <tissue>Spleen</tissue>
    </source>
</reference>
<reference key="7">
    <citation type="journal article" date="2010" name="J. Cell. Physiol.">
        <title>The nuclear genes Mtfr1 and Dufd1 regulate mitochondrial dynamic and cellular respiration.</title>
        <authorList>
            <person name="Monticone M."/>
            <person name="Panfoli I."/>
            <person name="Ravera S."/>
            <person name="Puglisi R."/>
            <person name="Jiang M.M."/>
            <person name="Morello R."/>
            <person name="Candiani S."/>
            <person name="Tonachini L."/>
            <person name="Biticchi R."/>
            <person name="Fabiano A."/>
            <person name="Cancedda R."/>
            <person name="Boitani C."/>
            <person name="Castagnola P."/>
        </authorList>
    </citation>
    <scope>FUNCTION IN AEROBIC RESPIRATION</scope>
</reference>
<keyword id="KW-0175">Coiled coil</keyword>
<keyword id="KW-0496">Mitochondrion</keyword>
<keyword id="KW-0597">Phosphoprotein</keyword>
<keyword id="KW-1185">Reference proteome</keyword>
<keyword id="KW-0809">Transit peptide</keyword>
<sequence>MLGWIKCLMRMWFQRVGVSMQSVLWSGKPYGSSRSIVRKIGTNLSLIQCPRVQFQLTSHATEWSPAHSGEDAVASFADVGLVATEEGECSIRLRAEVSSKPPHEDDPPCFEKPPSRHTSFPSLSQDKPSPERTLASEEALQKISALENELAALRAQIAKIVTLQEQQSPSAGCLDSSTSVTVAPPPPPPPPPPPLPLVLHQSTSALDLIKERREQRLSAGKTLATGHPKKPDMPNMLEILKDMNSVKLRSVKRSEKDVKPRPADTDHAAFIAEALKKKFAYRHNSQGETERGIPKPESEATSEPALFGPHILKSTGKMKALIENVPDS</sequence>
<feature type="transit peptide" description="Mitochondrion" evidence="2">
    <location>
        <begin position="1"/>
        <end position="48"/>
    </location>
</feature>
<feature type="chain" id="PRO_0000096623" description="Mitochondrial fission regulator 1">
    <location>
        <begin position="49"/>
        <end position="328"/>
    </location>
</feature>
<feature type="region of interest" description="Disordered" evidence="3">
    <location>
        <begin position="95"/>
        <end position="135"/>
    </location>
</feature>
<feature type="region of interest" description="Disordered" evidence="3">
    <location>
        <begin position="166"/>
        <end position="235"/>
    </location>
</feature>
<feature type="region of interest" description="Necessary and sufficient to promote mitochondrial fission" evidence="1">
    <location>
        <begin position="178"/>
        <end position="299"/>
    </location>
</feature>
<feature type="region of interest" description="Disordered" evidence="3">
    <location>
        <begin position="283"/>
        <end position="312"/>
    </location>
</feature>
<feature type="coiled-coil region" evidence="2">
    <location>
        <begin position="131"/>
        <end position="167"/>
    </location>
</feature>
<feature type="compositionally biased region" description="Basic and acidic residues" evidence="3">
    <location>
        <begin position="95"/>
        <end position="106"/>
    </location>
</feature>
<feature type="compositionally biased region" description="Polar residues" evidence="3">
    <location>
        <begin position="116"/>
        <end position="127"/>
    </location>
</feature>
<feature type="compositionally biased region" description="Polar residues" evidence="3">
    <location>
        <begin position="166"/>
        <end position="181"/>
    </location>
</feature>
<feature type="compositionally biased region" description="Pro residues" evidence="3">
    <location>
        <begin position="183"/>
        <end position="196"/>
    </location>
</feature>
<feature type="compositionally biased region" description="Basic and acidic residues" evidence="3">
    <location>
        <begin position="288"/>
        <end position="298"/>
    </location>
</feature>
<feature type="modified residue" description="Phosphoserine" evidence="7">
    <location>
        <position position="119"/>
    </location>
</feature>
<feature type="modified residue" description="Phosphoserine" evidence="7">
    <location>
        <position position="129"/>
    </location>
</feature>
<name>MTFR1_MOUSE</name>
<organism>
    <name type="scientific">Mus musculus</name>
    <name type="common">Mouse</name>
    <dbReference type="NCBI Taxonomy" id="10090"/>
    <lineage>
        <taxon>Eukaryota</taxon>
        <taxon>Metazoa</taxon>
        <taxon>Chordata</taxon>
        <taxon>Craniata</taxon>
        <taxon>Vertebrata</taxon>
        <taxon>Euteleostomi</taxon>
        <taxon>Mammalia</taxon>
        <taxon>Eutheria</taxon>
        <taxon>Euarchontoglires</taxon>
        <taxon>Glires</taxon>
        <taxon>Rodentia</taxon>
        <taxon>Myomorpha</taxon>
        <taxon>Muroidea</taxon>
        <taxon>Muridae</taxon>
        <taxon>Murinae</taxon>
        <taxon>Mus</taxon>
        <taxon>Mus</taxon>
    </lineage>
</organism>
<gene>
    <name type="primary">Mtfr1</name>
    <name type="synonym">Chppr</name>
    <name type="synonym">Kiaa0009</name>
</gene>
<accession>Q99MB2</accession>
<accession>Q9CQZ4</accession>
<dbReference type="EMBL" id="AF354708">
    <property type="protein sequence ID" value="AAK26434.1"/>
    <property type="molecule type" value="mRNA"/>
</dbReference>
<dbReference type="EMBL" id="AK004846">
    <property type="protein sequence ID" value="BAB23612.2"/>
    <property type="molecule type" value="mRNA"/>
</dbReference>
<dbReference type="EMBL" id="AK006952">
    <property type="protein sequence ID" value="BAB24802.2"/>
    <property type="molecule type" value="mRNA"/>
</dbReference>
<dbReference type="EMBL" id="AK075822">
    <property type="protein sequence ID" value="BAC35988.1"/>
    <property type="molecule type" value="mRNA"/>
</dbReference>
<dbReference type="EMBL" id="AK075992">
    <property type="protein sequence ID" value="BAC36103.1"/>
    <property type="molecule type" value="mRNA"/>
</dbReference>
<dbReference type="EMBL" id="BC019971">
    <property type="protein sequence ID" value="AAH19971.1"/>
    <property type="molecule type" value="mRNA"/>
</dbReference>
<dbReference type="CCDS" id="CCDS17256.1"/>
<dbReference type="RefSeq" id="NP_001240319.1">
    <property type="nucleotide sequence ID" value="NM_001253390.3"/>
</dbReference>
<dbReference type="RefSeq" id="NP_001240320.1">
    <property type="nucleotide sequence ID" value="NM_001253391.3"/>
</dbReference>
<dbReference type="RefSeq" id="NP_001343224.1">
    <property type="nucleotide sequence ID" value="NM_001356295.2"/>
</dbReference>
<dbReference type="RefSeq" id="NP_001415891.1">
    <property type="nucleotide sequence ID" value="NM_001428962.1"/>
</dbReference>
<dbReference type="RefSeq" id="NP_080458.1">
    <property type="nucleotide sequence ID" value="NM_026182.7"/>
</dbReference>
<dbReference type="RefSeq" id="XP_006535589.1">
    <property type="nucleotide sequence ID" value="XM_006535526.2"/>
</dbReference>
<dbReference type="RefSeq" id="XP_011248010.1">
    <property type="nucleotide sequence ID" value="XM_011249708.2"/>
</dbReference>
<dbReference type="SMR" id="Q99MB2"/>
<dbReference type="BioGRID" id="212214">
    <property type="interactions" value="1"/>
</dbReference>
<dbReference type="FunCoup" id="Q99MB2">
    <property type="interactions" value="1759"/>
</dbReference>
<dbReference type="IntAct" id="Q99MB2">
    <property type="interactions" value="1"/>
</dbReference>
<dbReference type="MINT" id="Q99MB2"/>
<dbReference type="STRING" id="10090.ENSMUSP00000119724"/>
<dbReference type="iPTMnet" id="Q99MB2"/>
<dbReference type="PhosphoSitePlus" id="Q99MB2"/>
<dbReference type="PaxDb" id="10090-ENSMUSP00000119724"/>
<dbReference type="ProteomicsDB" id="287633"/>
<dbReference type="Pumba" id="Q99MB2"/>
<dbReference type="Antibodypedia" id="11925">
    <property type="antibodies" value="119 antibodies from 23 providers"/>
</dbReference>
<dbReference type="DNASU" id="67472"/>
<dbReference type="Ensembl" id="ENSMUST00000117529.8">
    <property type="protein sequence ID" value="ENSMUSP00000112824.2"/>
    <property type="gene ID" value="ENSMUSG00000027601.14"/>
</dbReference>
<dbReference type="Ensembl" id="ENSMUST00000119865.8">
    <property type="protein sequence ID" value="ENSMUSP00000112752.2"/>
    <property type="gene ID" value="ENSMUSG00000027601.14"/>
</dbReference>
<dbReference type="Ensembl" id="ENSMUST00000130645.8">
    <property type="protein sequence ID" value="ENSMUSP00000119724.2"/>
    <property type="gene ID" value="ENSMUSG00000027601.14"/>
</dbReference>
<dbReference type="GeneID" id="67472"/>
<dbReference type="KEGG" id="mmu:67472"/>
<dbReference type="UCSC" id="uc008orp.2">
    <property type="organism name" value="mouse"/>
</dbReference>
<dbReference type="AGR" id="MGI:1914722"/>
<dbReference type="CTD" id="9650"/>
<dbReference type="MGI" id="MGI:1914722">
    <property type="gene designation" value="Mtfr1"/>
</dbReference>
<dbReference type="VEuPathDB" id="HostDB:ENSMUSG00000027601"/>
<dbReference type="eggNOG" id="ENOG502QSSN">
    <property type="taxonomic scope" value="Eukaryota"/>
</dbReference>
<dbReference type="GeneTree" id="ENSGT00950000183215"/>
<dbReference type="HOGENOM" id="CLU_059135_0_0_1"/>
<dbReference type="InParanoid" id="Q99MB2"/>
<dbReference type="OMA" id="CPRIHFQ"/>
<dbReference type="OrthoDB" id="2133332at2759"/>
<dbReference type="PhylomeDB" id="Q99MB2"/>
<dbReference type="TreeFam" id="TF331404"/>
<dbReference type="BioGRID-ORCS" id="67472">
    <property type="hits" value="3 hits in 75 CRISPR screens"/>
</dbReference>
<dbReference type="ChiTaRS" id="Mtfr1">
    <property type="organism name" value="mouse"/>
</dbReference>
<dbReference type="PRO" id="PR:Q99MB2"/>
<dbReference type="Proteomes" id="UP000000589">
    <property type="component" value="Chromosome 3"/>
</dbReference>
<dbReference type="RNAct" id="Q99MB2">
    <property type="molecule type" value="protein"/>
</dbReference>
<dbReference type="Bgee" id="ENSMUSG00000027601">
    <property type="expression patterns" value="Expressed in spermatid and 250 other cell types or tissues"/>
</dbReference>
<dbReference type="ExpressionAtlas" id="Q99MB2">
    <property type="expression patterns" value="baseline and differential"/>
</dbReference>
<dbReference type="GO" id="GO:0005829">
    <property type="term" value="C:cytosol"/>
    <property type="evidence" value="ECO:0007669"/>
    <property type="project" value="Ensembl"/>
</dbReference>
<dbReference type="GO" id="GO:0005739">
    <property type="term" value="C:mitochondrion"/>
    <property type="evidence" value="ECO:0007005"/>
    <property type="project" value="MGI"/>
</dbReference>
<dbReference type="GO" id="GO:0005886">
    <property type="term" value="C:plasma membrane"/>
    <property type="evidence" value="ECO:0007669"/>
    <property type="project" value="Ensembl"/>
</dbReference>
<dbReference type="GO" id="GO:0009060">
    <property type="term" value="P:aerobic respiration"/>
    <property type="evidence" value="ECO:0000315"/>
    <property type="project" value="UniProtKB"/>
</dbReference>
<dbReference type="GO" id="GO:0000266">
    <property type="term" value="P:mitochondrial fission"/>
    <property type="evidence" value="ECO:0000250"/>
    <property type="project" value="UniProtKB"/>
</dbReference>
<dbReference type="GO" id="GO:0007005">
    <property type="term" value="P:mitochondrion organization"/>
    <property type="evidence" value="ECO:0000250"/>
    <property type="project" value="UniProtKB"/>
</dbReference>
<dbReference type="InterPro" id="IPR007972">
    <property type="entry name" value="Mtfr1"/>
</dbReference>
<dbReference type="PANTHER" id="PTHR14215:SF1">
    <property type="entry name" value="MITOCHONDRIAL FISSION REGULATOR 1"/>
    <property type="match status" value="1"/>
</dbReference>
<dbReference type="PANTHER" id="PTHR14215">
    <property type="entry name" value="PROTEIN OF UNKNOWN FUNCTION DUF729"/>
    <property type="match status" value="1"/>
</dbReference>
<dbReference type="Pfam" id="PF05308">
    <property type="entry name" value="Mito_fiss_reg"/>
    <property type="match status" value="1"/>
</dbReference>